<keyword id="KW-1003">Cell membrane</keyword>
<keyword id="KW-0325">Glycoprotein</keyword>
<keyword id="KW-0472">Membrane</keyword>
<keyword id="KW-0812">Transmembrane</keyword>
<keyword id="KW-1133">Transmembrane helix</keyword>
<proteinExistence type="evidence at transcript level"/>
<dbReference type="EMBL" id="FS995965">
    <property type="status" value="NOT_ANNOTATED_CDS"/>
    <property type="molecule type" value="mRNA"/>
</dbReference>
<dbReference type="SMR" id="P0DI20"/>
<dbReference type="GO" id="GO:0005886">
    <property type="term" value="C:plasma membrane"/>
    <property type="evidence" value="ECO:0007669"/>
    <property type="project" value="UniProtKB-SubCell"/>
</dbReference>
<dbReference type="InterPro" id="IPR006459">
    <property type="entry name" value="CASP/CASPL"/>
</dbReference>
<dbReference type="InterPro" id="IPR006702">
    <property type="entry name" value="CASP_dom"/>
</dbReference>
<dbReference type="NCBIfam" id="TIGR01569">
    <property type="entry name" value="A_tha_TIGR01569"/>
    <property type="match status" value="1"/>
</dbReference>
<dbReference type="PANTHER" id="PTHR33573:SF30">
    <property type="entry name" value="CASP-LIKE PROTEIN 2C1-RELATED"/>
    <property type="match status" value="1"/>
</dbReference>
<dbReference type="PANTHER" id="PTHR33573">
    <property type="entry name" value="CASP-LIKE PROTEIN 4A4"/>
    <property type="match status" value="1"/>
</dbReference>
<dbReference type="Pfam" id="PF04535">
    <property type="entry name" value="CASP_dom"/>
    <property type="match status" value="1"/>
</dbReference>
<comment type="subunit">
    <text evidence="1">Homodimer and heterodimers.</text>
</comment>
<comment type="subcellular location">
    <subcellularLocation>
        <location evidence="1">Cell membrane</location>
        <topology evidence="1">Multi-pass membrane protein</topology>
    </subcellularLocation>
</comment>
<comment type="similarity">
    <text evidence="4">Belongs to the Casparian strip membrane proteins (CASP) family.</text>
</comment>
<evidence type="ECO:0000250" key="1"/>
<evidence type="ECO:0000255" key="2"/>
<evidence type="ECO:0000256" key="3">
    <source>
        <dbReference type="SAM" id="MobiDB-lite"/>
    </source>
</evidence>
<evidence type="ECO:0000305" key="4"/>
<organism>
    <name type="scientific">Osmunda lancea</name>
    <name type="common">Fern</name>
    <dbReference type="NCBI Taxonomy" id="90694"/>
    <lineage>
        <taxon>Eukaryota</taxon>
        <taxon>Viridiplantae</taxon>
        <taxon>Streptophyta</taxon>
        <taxon>Embryophyta</taxon>
        <taxon>Tracheophyta</taxon>
        <taxon>Polypodiopsida</taxon>
        <taxon>Polypodiidae</taxon>
        <taxon>Osmundales</taxon>
        <taxon>Osmundaceae</taxon>
        <taxon>Osmunda</taxon>
    </lineage>
</organism>
<protein>
    <recommendedName>
        <fullName>CASP-like protein 2U2</fullName>
        <shortName>OlCASPL2U2</shortName>
    </recommendedName>
</protein>
<feature type="chain" id="PRO_0000417789" description="CASP-like protein 2U2">
    <location>
        <begin position="1"/>
        <end position="203"/>
    </location>
</feature>
<feature type="topological domain" description="Cytoplasmic" evidence="2">
    <location>
        <begin position="1"/>
        <end position="27"/>
    </location>
</feature>
<feature type="transmembrane region" description="Helical" evidence="2">
    <location>
        <begin position="28"/>
        <end position="48"/>
    </location>
</feature>
<feature type="topological domain" description="Extracellular" evidence="2">
    <location>
        <begin position="49"/>
        <end position="73"/>
    </location>
</feature>
<feature type="transmembrane region" description="Helical" evidence="2">
    <location>
        <begin position="74"/>
        <end position="94"/>
    </location>
</feature>
<feature type="topological domain" description="Cytoplasmic" evidence="2">
    <location>
        <begin position="95"/>
        <end position="108"/>
    </location>
</feature>
<feature type="transmembrane region" description="Helical" evidence="2">
    <location>
        <begin position="109"/>
        <end position="129"/>
    </location>
</feature>
<feature type="topological domain" description="Extracellular" evidence="2">
    <location>
        <begin position="130"/>
        <end position="163"/>
    </location>
</feature>
<feature type="transmembrane region" description="Helical" evidence="2">
    <location>
        <begin position="164"/>
        <end position="184"/>
    </location>
</feature>
<feature type="topological domain" description="Cytoplasmic" evidence="2">
    <location>
        <begin position="185"/>
        <end position="203"/>
    </location>
</feature>
<feature type="region of interest" description="Disordered" evidence="3">
    <location>
        <begin position="1"/>
        <end position="21"/>
    </location>
</feature>
<feature type="glycosylation site" description="N-linked (GlcNAc...) asparagine" evidence="2">
    <location>
        <position position="51"/>
    </location>
</feature>
<sequence>MGGFVDDGAAGLAPSHGSSRAGRGLEGAGVFLRFVASLLSIAGLMLLVKDNQTVQQMVATEAVTLETKYSDISAFVFLLYTNGLVAVYCFFLALASVFSLIASARSGKLAGWVTFVLDQGLAYVLLAAAAASTEVLYLAENGDLKTSWAEICSQFGHFCHMARASIVVSFLSMLAMAVLSVMSAQQLFSKYRRPMTAKTAQDI</sequence>
<accession>P0DI20</accession>
<reference key="1">
    <citation type="submission" date="2010-07" db="EMBL/GenBank/DDBJ databases">
        <title>cDNA library of Osmunda lancea.</title>
        <authorList>
            <person name="Kakugawa-Yatabe Y."/>
            <person name="Tsutsumi C."/>
            <person name="Hirayama Y."/>
            <person name="Kato M."/>
        </authorList>
    </citation>
    <scope>NUCLEOTIDE SEQUENCE [LARGE SCALE MRNA]</scope>
    <source>
        <tissue>Leaf</tissue>
    </source>
</reference>
<reference key="2">
    <citation type="journal article" date="2014" name="Plant Physiol.">
        <title>Functional and evolutionary analysis of the CASPARIAN STRIP MEMBRANE DOMAIN PROTEIN family.</title>
        <authorList>
            <person name="Roppolo D."/>
            <person name="Boeckmann B."/>
            <person name="Pfister A."/>
            <person name="Boutet E."/>
            <person name="Rubio M.C."/>
            <person name="Denervaud-Tendon V."/>
            <person name="Vermeer J.E."/>
            <person name="Gheyselinck J."/>
            <person name="Xenarios I."/>
            <person name="Geldner N."/>
        </authorList>
    </citation>
    <scope>GENE FAMILY</scope>
    <scope>NOMENCLATURE</scope>
</reference>
<name>CSPL1_OSMLA</name>